<reference key="1">
    <citation type="journal article" date="2000" name="Nature">
        <title>Complete genome sequence of Pseudomonas aeruginosa PAO1, an opportunistic pathogen.</title>
        <authorList>
            <person name="Stover C.K."/>
            <person name="Pham X.-Q.T."/>
            <person name="Erwin A.L."/>
            <person name="Mizoguchi S.D."/>
            <person name="Warrener P."/>
            <person name="Hickey M.J."/>
            <person name="Brinkman F.S.L."/>
            <person name="Hufnagle W.O."/>
            <person name="Kowalik D.J."/>
            <person name="Lagrou M."/>
            <person name="Garber R.L."/>
            <person name="Goltry L."/>
            <person name="Tolentino E."/>
            <person name="Westbrock-Wadman S."/>
            <person name="Yuan Y."/>
            <person name="Brody L.L."/>
            <person name="Coulter S.N."/>
            <person name="Folger K.R."/>
            <person name="Kas A."/>
            <person name="Larbig K."/>
            <person name="Lim R.M."/>
            <person name="Smith K.A."/>
            <person name="Spencer D.H."/>
            <person name="Wong G.K.-S."/>
            <person name="Wu Z."/>
            <person name="Paulsen I.T."/>
            <person name="Reizer J."/>
            <person name="Saier M.H. Jr."/>
            <person name="Hancock R.E.W."/>
            <person name="Lory S."/>
            <person name="Olson M.V."/>
        </authorList>
    </citation>
    <scope>NUCLEOTIDE SEQUENCE [LARGE SCALE GENOMIC DNA]</scope>
    <source>
        <strain>ATCC 15692 / DSM 22644 / CIP 104116 / JCM 14847 / LMG 12228 / 1C / PRS 101 / PAO1</strain>
    </source>
</reference>
<reference key="2">
    <citation type="journal article" date="2007" name="J. Bacteriol.">
        <title>Functional genomics enables identification of genes of the arginine transaminase pathway in Pseudomonas aeruginosa.</title>
        <authorList>
            <person name="Yang Z."/>
            <person name="Lu C.D."/>
        </authorList>
    </citation>
    <scope>FUNCTION</scope>
    <scope>PATHWAY</scope>
    <scope>DISRUPTION PHENOTYPE</scope>
    <scope>GENE NAME</scope>
    <source>
        <strain>ATCC 15692 / DSM 22644 / CIP 104116 / JCM 14847 / LMG 12228 / 1C / PRS 101 / PAO1</strain>
    </source>
</reference>
<comment type="function">
    <text evidence="4">Member of the two-component regulatory system AruS/AruR, which is involved in the regulation of the arginine transaminase (ATA) pathway in response to exogeneous L-arginine. Regulates transcription of aruH and aruI.</text>
</comment>
<comment type="pathway">
    <text evidence="4">Amino-acid degradation; L-arginine degradation [regulation].</text>
</comment>
<comment type="subcellular location">
    <subcellularLocation>
        <location evidence="1">Cytoplasm</location>
    </subcellularLocation>
</comment>
<comment type="PTM">
    <text evidence="1">Phosphorylated by AruS.</text>
</comment>
<comment type="disruption phenotype">
    <text evidence="4">Disruption in the aruF mutant prevents growth on L-arginine.</text>
</comment>
<accession>Q9HUI2</accession>
<feature type="chain" id="PRO_0000418390" description="Transcriptional regulatory protein AruR">
    <location>
        <begin position="1"/>
        <end position="244"/>
    </location>
</feature>
<feature type="domain" description="Response regulatory" evidence="2">
    <location>
        <begin position="6"/>
        <end position="124"/>
    </location>
</feature>
<feature type="DNA-binding region" description="OmpR/PhoB-type" evidence="3">
    <location>
        <begin position="139"/>
        <end position="239"/>
    </location>
</feature>
<feature type="modified residue" description="4-aspartylphosphate" evidence="2">
    <location>
        <position position="60"/>
    </location>
</feature>
<keyword id="KW-0963">Cytoplasm</keyword>
<keyword id="KW-0238">DNA-binding</keyword>
<keyword id="KW-0597">Phosphoprotein</keyword>
<keyword id="KW-1185">Reference proteome</keyword>
<keyword id="KW-0804">Transcription</keyword>
<keyword id="KW-0805">Transcription regulation</keyword>
<keyword id="KW-0902">Two-component regulatory system</keyword>
<organism>
    <name type="scientific">Pseudomonas aeruginosa (strain ATCC 15692 / DSM 22644 / CIP 104116 / JCM 14847 / LMG 12228 / 1C / PRS 101 / PAO1)</name>
    <dbReference type="NCBI Taxonomy" id="208964"/>
    <lineage>
        <taxon>Bacteria</taxon>
        <taxon>Pseudomonadati</taxon>
        <taxon>Pseudomonadota</taxon>
        <taxon>Gammaproteobacteria</taxon>
        <taxon>Pseudomonadales</taxon>
        <taxon>Pseudomonadaceae</taxon>
        <taxon>Pseudomonas</taxon>
    </lineage>
</organism>
<gene>
    <name type="primary">aruR</name>
    <name type="ordered locus">PA4983</name>
</gene>
<dbReference type="EMBL" id="AE004091">
    <property type="protein sequence ID" value="AAG08368.1"/>
    <property type="molecule type" value="Genomic_DNA"/>
</dbReference>
<dbReference type="PIR" id="H83022">
    <property type="entry name" value="H83022"/>
</dbReference>
<dbReference type="RefSeq" id="NP_253670.1">
    <property type="nucleotide sequence ID" value="NC_002516.2"/>
</dbReference>
<dbReference type="RefSeq" id="WP_003095718.1">
    <property type="nucleotide sequence ID" value="NZ_QZGE01000002.1"/>
</dbReference>
<dbReference type="SMR" id="Q9HUI2"/>
<dbReference type="STRING" id="208964.PA4983"/>
<dbReference type="PaxDb" id="208964-PA4983"/>
<dbReference type="GeneID" id="880341"/>
<dbReference type="KEGG" id="pae:PA4983"/>
<dbReference type="PATRIC" id="fig|208964.12.peg.5221"/>
<dbReference type="PseudoCAP" id="PA4983"/>
<dbReference type="HOGENOM" id="CLU_000445_30_4_6"/>
<dbReference type="InParanoid" id="Q9HUI2"/>
<dbReference type="OrthoDB" id="9802426at2"/>
<dbReference type="PhylomeDB" id="Q9HUI2"/>
<dbReference type="BioCyc" id="PAER208964:G1FZ6-5099-MONOMER"/>
<dbReference type="UniPathway" id="UPA00073"/>
<dbReference type="Proteomes" id="UP000002438">
    <property type="component" value="Chromosome"/>
</dbReference>
<dbReference type="GO" id="GO:0005829">
    <property type="term" value="C:cytosol"/>
    <property type="evidence" value="ECO:0000318"/>
    <property type="project" value="GO_Central"/>
</dbReference>
<dbReference type="GO" id="GO:0032993">
    <property type="term" value="C:protein-DNA complex"/>
    <property type="evidence" value="ECO:0000318"/>
    <property type="project" value="GO_Central"/>
</dbReference>
<dbReference type="GO" id="GO:0000156">
    <property type="term" value="F:phosphorelay response regulator activity"/>
    <property type="evidence" value="ECO:0000318"/>
    <property type="project" value="GO_Central"/>
</dbReference>
<dbReference type="GO" id="GO:0000976">
    <property type="term" value="F:transcription cis-regulatory region binding"/>
    <property type="evidence" value="ECO:0000318"/>
    <property type="project" value="GO_Central"/>
</dbReference>
<dbReference type="GO" id="GO:0006527">
    <property type="term" value="P:arginine catabolic process"/>
    <property type="evidence" value="ECO:0007669"/>
    <property type="project" value="UniProtKB-UniPathway"/>
</dbReference>
<dbReference type="GO" id="GO:0006355">
    <property type="term" value="P:regulation of DNA-templated transcription"/>
    <property type="evidence" value="ECO:0000318"/>
    <property type="project" value="GO_Central"/>
</dbReference>
<dbReference type="CDD" id="cd17619">
    <property type="entry name" value="REC_OmpR_ArcA_TorR-like"/>
    <property type="match status" value="1"/>
</dbReference>
<dbReference type="CDD" id="cd00383">
    <property type="entry name" value="trans_reg_C"/>
    <property type="match status" value="1"/>
</dbReference>
<dbReference type="FunFam" id="1.10.10.10:FF:000099">
    <property type="entry name" value="Two-component system response regulator TorR"/>
    <property type="match status" value="1"/>
</dbReference>
<dbReference type="Gene3D" id="3.40.50.2300">
    <property type="match status" value="1"/>
</dbReference>
<dbReference type="Gene3D" id="6.10.250.690">
    <property type="match status" value="1"/>
</dbReference>
<dbReference type="Gene3D" id="1.10.10.10">
    <property type="entry name" value="Winged helix-like DNA-binding domain superfamily/Winged helix DNA-binding domain"/>
    <property type="match status" value="1"/>
</dbReference>
<dbReference type="InterPro" id="IPR011006">
    <property type="entry name" value="CheY-like_superfamily"/>
</dbReference>
<dbReference type="InterPro" id="IPR001867">
    <property type="entry name" value="OmpR/PhoB-type_DNA-bd"/>
</dbReference>
<dbReference type="InterPro" id="IPR016032">
    <property type="entry name" value="Sig_transdc_resp-reg_C-effctor"/>
</dbReference>
<dbReference type="InterPro" id="IPR001789">
    <property type="entry name" value="Sig_transdc_resp-reg_receiver"/>
</dbReference>
<dbReference type="InterPro" id="IPR039420">
    <property type="entry name" value="WalR-like"/>
</dbReference>
<dbReference type="InterPro" id="IPR036388">
    <property type="entry name" value="WH-like_DNA-bd_sf"/>
</dbReference>
<dbReference type="PANTHER" id="PTHR48111">
    <property type="entry name" value="REGULATOR OF RPOS"/>
    <property type="match status" value="1"/>
</dbReference>
<dbReference type="PANTHER" id="PTHR48111:SF58">
    <property type="entry name" value="TORCAD OPERON TRANSCRIPTIONAL REGULATORY PROTEIN TORR"/>
    <property type="match status" value="1"/>
</dbReference>
<dbReference type="Pfam" id="PF00072">
    <property type="entry name" value="Response_reg"/>
    <property type="match status" value="1"/>
</dbReference>
<dbReference type="Pfam" id="PF00486">
    <property type="entry name" value="Trans_reg_C"/>
    <property type="match status" value="1"/>
</dbReference>
<dbReference type="SMART" id="SM00448">
    <property type="entry name" value="REC"/>
    <property type="match status" value="1"/>
</dbReference>
<dbReference type="SMART" id="SM00862">
    <property type="entry name" value="Trans_reg_C"/>
    <property type="match status" value="1"/>
</dbReference>
<dbReference type="SUPFAM" id="SSF46894">
    <property type="entry name" value="C-terminal effector domain of the bipartite response regulators"/>
    <property type="match status" value="1"/>
</dbReference>
<dbReference type="SUPFAM" id="SSF52172">
    <property type="entry name" value="CheY-like"/>
    <property type="match status" value="1"/>
</dbReference>
<dbReference type="PROSITE" id="PS51755">
    <property type="entry name" value="OMPR_PHOB"/>
    <property type="match status" value="1"/>
</dbReference>
<dbReference type="PROSITE" id="PS50110">
    <property type="entry name" value="RESPONSE_REGULATORY"/>
    <property type="match status" value="1"/>
</dbReference>
<protein>
    <recommendedName>
        <fullName>Transcriptional regulatory protein AruR</fullName>
    </recommendedName>
</protein>
<evidence type="ECO:0000250" key="1"/>
<evidence type="ECO:0000255" key="2">
    <source>
        <dbReference type="PROSITE-ProRule" id="PRU00169"/>
    </source>
</evidence>
<evidence type="ECO:0000255" key="3">
    <source>
        <dbReference type="PROSITE-ProRule" id="PRU01091"/>
    </source>
</evidence>
<evidence type="ECO:0000269" key="4">
    <source>
    </source>
</evidence>
<sequence length="244" mass="27177">MAMVPRVLVVDDDPVIRELLQAYLGEEGYDVLCAGNAEQAEACLAECAHLGQPVELVLLDIRLPGKDGLTLTRELRVRSEVGIILITGRNDEIDRIVGLECGADDYVIKPLNPRELVSRAKNLIRRVRHAQASAGPARQALRQFGDWLLDADRRRLIDHAGNETLLTHGEFQLLGAFLRNSGHTLSRDQLMDQIRNREWLPSDRSIDVLVGRLRRKLRDDPAEPQLIITIHGAGYLFTAAASDA</sequence>
<proteinExistence type="inferred from homology"/>
<name>ARUR_PSEAE</name>